<reference key="1">
    <citation type="journal article" date="1998" name="DNA Res.">
        <title>Complete sequence and gene organization of the genome of a hyper-thermophilic archaebacterium, Pyrococcus horikoshii OT3.</title>
        <authorList>
            <person name="Kawarabayasi Y."/>
            <person name="Sawada M."/>
            <person name="Horikawa H."/>
            <person name="Haikawa Y."/>
            <person name="Hino Y."/>
            <person name="Yamamoto S."/>
            <person name="Sekine M."/>
            <person name="Baba S."/>
            <person name="Kosugi H."/>
            <person name="Hosoyama A."/>
            <person name="Nagai Y."/>
            <person name="Sakai M."/>
            <person name="Ogura K."/>
            <person name="Otsuka R."/>
            <person name="Nakazawa H."/>
            <person name="Takamiya M."/>
            <person name="Ohfuku Y."/>
            <person name="Funahashi T."/>
            <person name="Tanaka T."/>
            <person name="Kudoh Y."/>
            <person name="Yamazaki J."/>
            <person name="Kushida N."/>
            <person name="Oguchi A."/>
            <person name="Aoki K."/>
            <person name="Yoshizawa T."/>
            <person name="Nakamura Y."/>
            <person name="Robb F.T."/>
            <person name="Horikoshi K."/>
            <person name="Masuchi Y."/>
            <person name="Shizuya H."/>
            <person name="Kikuchi H."/>
        </authorList>
    </citation>
    <scope>NUCLEOTIDE SEQUENCE [LARGE SCALE GENOMIC DNA]</scope>
    <source>
        <strain>ATCC 700860 / DSM 12428 / JCM 9974 / NBRC 100139 / OT-3</strain>
    </source>
</reference>
<sequence length="342" mass="39011">MKAKDIVLKKSEKIEGVEVKGPWLDDAQSLEEVVSYYYRIGFQATHLGRAIEIWRKVEEKRERGEEIRVFLGYTSNIISSGLREIIAWLVKEKKVDVIVTTAGGVEEDFIKSLKPFILGDWEVDDAELRKKGVNRIGNIFVPNDRYIEFEKYMIPFFERVLKIEEKLSRPLTASEFIYEMGRYMDEKLGKEKEKSVIYWAYKNNIPIFCPAITDGSIGDMLYFFKEERRDSRLIIDIANDIVKLNNLAITAKETASIILGGSLPKHAIINANLFRGGTDYAIYISTAVPWDGSLSGAPPREGVSWGKIKAKADYVEVWGDATLIFPILVWMVMKARGQGYAQ</sequence>
<keyword id="KW-0002">3D-structure</keyword>
<keyword id="KW-0386">Hypusine biosynthesis</keyword>
<keyword id="KW-0520">NAD</keyword>
<keyword id="KW-0808">Transferase</keyword>
<proteinExistence type="evidence at protein level"/>
<accession>O50105</accession>
<name>DHYS_PYRHO</name>
<gene>
    <name type="primary">dys</name>
    <name type="ordered locus">PH1397</name>
</gene>
<organism>
    <name type="scientific">Pyrococcus horikoshii (strain ATCC 700860 / DSM 12428 / JCM 9974 / NBRC 100139 / OT-3)</name>
    <dbReference type="NCBI Taxonomy" id="70601"/>
    <lineage>
        <taxon>Archaea</taxon>
        <taxon>Methanobacteriati</taxon>
        <taxon>Methanobacteriota</taxon>
        <taxon>Thermococci</taxon>
        <taxon>Thermococcales</taxon>
        <taxon>Thermococcaceae</taxon>
        <taxon>Pyrococcus</taxon>
    </lineage>
</organism>
<dbReference type="EC" id="2.5.1.46"/>
<dbReference type="EMBL" id="BA000001">
    <property type="protein sequence ID" value="BAA30503.1"/>
    <property type="molecule type" value="Genomic_DNA"/>
</dbReference>
<dbReference type="PIR" id="G71012">
    <property type="entry name" value="G71012"/>
</dbReference>
<dbReference type="RefSeq" id="WP_010885484.1">
    <property type="nucleotide sequence ID" value="NC_000961.1"/>
</dbReference>
<dbReference type="PDB" id="7CMC">
    <property type="method" value="X-ray"/>
    <property type="resolution" value="2.20 A"/>
    <property type="chains" value="A/B/C/D=1-342"/>
</dbReference>
<dbReference type="PDBsum" id="7CMC"/>
<dbReference type="SMR" id="O50105"/>
<dbReference type="STRING" id="70601.gene:9378373"/>
<dbReference type="EnsemblBacteria" id="BAA30503">
    <property type="protein sequence ID" value="BAA30503"/>
    <property type="gene ID" value="BAA30503"/>
</dbReference>
<dbReference type="GeneID" id="1443722"/>
<dbReference type="KEGG" id="pho:PH1397"/>
<dbReference type="eggNOG" id="arCOG04142">
    <property type="taxonomic scope" value="Archaea"/>
</dbReference>
<dbReference type="OrthoDB" id="17730at2157"/>
<dbReference type="UniPathway" id="UPA00354"/>
<dbReference type="Proteomes" id="UP000000752">
    <property type="component" value="Chromosome"/>
</dbReference>
<dbReference type="GO" id="GO:0005737">
    <property type="term" value="C:cytoplasm"/>
    <property type="evidence" value="ECO:0007669"/>
    <property type="project" value="TreeGrafter"/>
</dbReference>
<dbReference type="GO" id="GO:0034038">
    <property type="term" value="F:deoxyhypusine synthase activity"/>
    <property type="evidence" value="ECO:0007669"/>
    <property type="project" value="UniProtKB-UniRule"/>
</dbReference>
<dbReference type="FunFam" id="3.40.910.10:FF:000004">
    <property type="entry name" value="Probable deoxyhypusine synthase"/>
    <property type="match status" value="1"/>
</dbReference>
<dbReference type="Gene3D" id="3.40.910.10">
    <property type="entry name" value="Deoxyhypusine synthase"/>
    <property type="match status" value="1"/>
</dbReference>
<dbReference type="HAMAP" id="MF_00153">
    <property type="entry name" value="DHS"/>
    <property type="match status" value="1"/>
</dbReference>
<dbReference type="InterPro" id="IPR022899">
    <property type="entry name" value="Deoxyhypus_synthase_arc"/>
</dbReference>
<dbReference type="InterPro" id="IPR002773">
    <property type="entry name" value="Deoxyhypusine_synthase"/>
</dbReference>
<dbReference type="InterPro" id="IPR036982">
    <property type="entry name" value="Deoxyhypusine_synthase_sf"/>
</dbReference>
<dbReference type="InterPro" id="IPR029035">
    <property type="entry name" value="DHS-like_NAD/FAD-binding_dom"/>
</dbReference>
<dbReference type="NCBIfam" id="TIGR00321">
    <property type="entry name" value="dhys"/>
    <property type="match status" value="1"/>
</dbReference>
<dbReference type="NCBIfam" id="NF003052">
    <property type="entry name" value="PRK03971.1"/>
    <property type="match status" value="1"/>
</dbReference>
<dbReference type="PANTHER" id="PTHR11703">
    <property type="entry name" value="DEOXYHYPUSINE SYNTHASE"/>
    <property type="match status" value="1"/>
</dbReference>
<dbReference type="PANTHER" id="PTHR11703:SF0">
    <property type="entry name" value="DEOXYHYPUSINE SYNTHASE"/>
    <property type="match status" value="1"/>
</dbReference>
<dbReference type="Pfam" id="PF01916">
    <property type="entry name" value="DS"/>
    <property type="match status" value="1"/>
</dbReference>
<dbReference type="SUPFAM" id="SSF52467">
    <property type="entry name" value="DHS-like NAD/FAD-binding domain"/>
    <property type="match status" value="1"/>
</dbReference>
<comment type="function">
    <text evidence="1">Catalyzes the NAD-dependent oxidative cleavage of spermidine and the subsequent transfer of the butylamine moiety of spermidine to the epsilon-amino group of a specific lysine residue of the eIF-5A precursor protein to form the intermediate deoxyhypusine residue.</text>
</comment>
<comment type="catalytic activity">
    <reaction>
        <text>[eIF5A protein]-L-lysine + spermidine = [eIF5A protein]-deoxyhypusine + propane-1,3-diamine</text>
        <dbReference type="Rhea" id="RHEA:33299"/>
        <dbReference type="Rhea" id="RHEA-COMP:10143"/>
        <dbReference type="Rhea" id="RHEA-COMP:10144"/>
        <dbReference type="ChEBI" id="CHEBI:29969"/>
        <dbReference type="ChEBI" id="CHEBI:57484"/>
        <dbReference type="ChEBI" id="CHEBI:57834"/>
        <dbReference type="ChEBI" id="CHEBI:82657"/>
        <dbReference type="EC" id="2.5.1.46"/>
    </reaction>
</comment>
<comment type="cofactor">
    <cofactor evidence="1">
        <name>NAD(+)</name>
        <dbReference type="ChEBI" id="CHEBI:57540"/>
    </cofactor>
</comment>
<comment type="pathway">
    <text>Protein modification; eIF5A hypusination.</text>
</comment>
<comment type="similarity">
    <text evidence="2">Belongs to the deoxyhypusine synthase family.</text>
</comment>
<feature type="chain" id="PRO_0000134505" description="Probable deoxyhypusine synthase">
    <location>
        <begin position="1"/>
        <end position="342"/>
    </location>
</feature>
<feature type="active site" description="Nucleophile" evidence="1">
    <location>
        <position position="307"/>
    </location>
</feature>
<feature type="turn" evidence="3">
    <location>
        <begin position="24"/>
        <end position="26"/>
    </location>
</feature>
<feature type="helix" evidence="3">
    <location>
        <begin position="30"/>
        <end position="34"/>
    </location>
</feature>
<feature type="helix" evidence="3">
    <location>
        <begin position="35"/>
        <end position="39"/>
    </location>
</feature>
<feature type="helix" evidence="3">
    <location>
        <begin position="42"/>
        <end position="62"/>
    </location>
</feature>
<feature type="strand" evidence="3">
    <location>
        <begin position="68"/>
        <end position="73"/>
    </location>
</feature>
<feature type="helix" evidence="3">
    <location>
        <begin position="75"/>
        <end position="79"/>
    </location>
</feature>
<feature type="helix" evidence="3">
    <location>
        <begin position="82"/>
        <end position="91"/>
    </location>
</feature>
<feature type="strand" evidence="3">
    <location>
        <begin position="96"/>
        <end position="99"/>
    </location>
</feature>
<feature type="helix" evidence="3">
    <location>
        <begin position="102"/>
        <end position="111"/>
    </location>
</feature>
<feature type="helix" evidence="3">
    <location>
        <begin position="127"/>
        <end position="129"/>
    </location>
</feature>
<feature type="turn" evidence="3">
    <location>
        <begin position="130"/>
        <end position="132"/>
    </location>
</feature>
<feature type="strand" evidence="3">
    <location>
        <begin position="133"/>
        <end position="136"/>
    </location>
</feature>
<feature type="strand" evidence="3">
    <location>
        <begin position="139"/>
        <end position="142"/>
    </location>
</feature>
<feature type="helix" evidence="3">
    <location>
        <begin position="144"/>
        <end position="167"/>
    </location>
</feature>
<feature type="helix" evidence="3">
    <location>
        <begin position="173"/>
        <end position="187"/>
    </location>
</feature>
<feature type="helix" evidence="3">
    <location>
        <begin position="190"/>
        <end position="194"/>
    </location>
</feature>
<feature type="helix" evidence="3">
    <location>
        <begin position="196"/>
        <end position="202"/>
    </location>
</feature>
<feature type="turn" evidence="3">
    <location>
        <begin position="210"/>
        <end position="213"/>
    </location>
</feature>
<feature type="helix" evidence="3">
    <location>
        <begin position="216"/>
        <end position="228"/>
    </location>
</feature>
<feature type="helix" evidence="3">
    <location>
        <begin position="240"/>
        <end position="250"/>
    </location>
</feature>
<feature type="strand" evidence="3">
    <location>
        <begin position="252"/>
        <end position="260"/>
    </location>
</feature>
<feature type="helix" evidence="3">
    <location>
        <begin position="262"/>
        <end position="273"/>
    </location>
</feature>
<feature type="turn" evidence="3">
    <location>
        <begin position="274"/>
        <end position="276"/>
    </location>
</feature>
<feature type="strand" evidence="3">
    <location>
        <begin position="279"/>
        <end position="287"/>
    </location>
</feature>
<feature type="helix" evidence="3">
    <location>
        <begin position="298"/>
        <end position="300"/>
    </location>
</feature>
<feature type="strand" evidence="3">
    <location>
        <begin position="314"/>
        <end position="319"/>
    </location>
</feature>
<feature type="helix" evidence="3">
    <location>
        <begin position="321"/>
        <end position="333"/>
    </location>
</feature>
<protein>
    <recommendedName>
        <fullName>Probable deoxyhypusine synthase</fullName>
        <shortName>DHS</shortName>
        <ecNumber>2.5.1.46</ecNumber>
    </recommendedName>
</protein>
<evidence type="ECO:0000250" key="1"/>
<evidence type="ECO:0000305" key="2"/>
<evidence type="ECO:0007829" key="3">
    <source>
        <dbReference type="PDB" id="7CMC"/>
    </source>
</evidence>